<gene>
    <name evidence="1" type="primary">rsmA</name>
    <name evidence="1" type="synonym">ksgA</name>
    <name type="ordered locus">XC_3440</name>
</gene>
<reference key="1">
    <citation type="journal article" date="2005" name="Genome Res.">
        <title>Comparative and functional genomic analyses of the pathogenicity of phytopathogen Xanthomonas campestris pv. campestris.</title>
        <authorList>
            <person name="Qian W."/>
            <person name="Jia Y."/>
            <person name="Ren S.-X."/>
            <person name="He Y.-Q."/>
            <person name="Feng J.-X."/>
            <person name="Lu L.-F."/>
            <person name="Sun Q."/>
            <person name="Ying G."/>
            <person name="Tang D.-J."/>
            <person name="Tang H."/>
            <person name="Wu W."/>
            <person name="Hao P."/>
            <person name="Wang L."/>
            <person name="Jiang B.-L."/>
            <person name="Zeng S."/>
            <person name="Gu W.-Y."/>
            <person name="Lu G."/>
            <person name="Rong L."/>
            <person name="Tian Y."/>
            <person name="Yao Z."/>
            <person name="Fu G."/>
            <person name="Chen B."/>
            <person name="Fang R."/>
            <person name="Qiang B."/>
            <person name="Chen Z."/>
            <person name="Zhao G.-P."/>
            <person name="Tang J.-L."/>
            <person name="He C."/>
        </authorList>
    </citation>
    <scope>NUCLEOTIDE SEQUENCE [LARGE SCALE GENOMIC DNA]</scope>
    <source>
        <strain>8004</strain>
    </source>
</reference>
<comment type="function">
    <text evidence="1">Specifically dimethylates two adjacent adenosines (A1518 and A1519) in the loop of a conserved hairpin near the 3'-end of 16S rRNA in the 30S particle. May play a critical role in biogenesis of 30S subunits.</text>
</comment>
<comment type="catalytic activity">
    <reaction evidence="1">
        <text>adenosine(1518)/adenosine(1519) in 16S rRNA + 4 S-adenosyl-L-methionine = N(6)-dimethyladenosine(1518)/N(6)-dimethyladenosine(1519) in 16S rRNA + 4 S-adenosyl-L-homocysteine + 4 H(+)</text>
        <dbReference type="Rhea" id="RHEA:19609"/>
        <dbReference type="Rhea" id="RHEA-COMP:10232"/>
        <dbReference type="Rhea" id="RHEA-COMP:10233"/>
        <dbReference type="ChEBI" id="CHEBI:15378"/>
        <dbReference type="ChEBI" id="CHEBI:57856"/>
        <dbReference type="ChEBI" id="CHEBI:59789"/>
        <dbReference type="ChEBI" id="CHEBI:74411"/>
        <dbReference type="ChEBI" id="CHEBI:74493"/>
        <dbReference type="EC" id="2.1.1.182"/>
    </reaction>
</comment>
<comment type="subcellular location">
    <subcellularLocation>
        <location evidence="1">Cytoplasm</location>
    </subcellularLocation>
</comment>
<comment type="similarity">
    <text evidence="1">Belongs to the class I-like SAM-binding methyltransferase superfamily. rRNA adenine N(6)-methyltransferase family. RsmA subfamily.</text>
</comment>
<organism>
    <name type="scientific">Xanthomonas campestris pv. campestris (strain 8004)</name>
    <dbReference type="NCBI Taxonomy" id="314565"/>
    <lineage>
        <taxon>Bacteria</taxon>
        <taxon>Pseudomonadati</taxon>
        <taxon>Pseudomonadota</taxon>
        <taxon>Gammaproteobacteria</taxon>
        <taxon>Lysobacterales</taxon>
        <taxon>Lysobacteraceae</taxon>
        <taxon>Xanthomonas</taxon>
    </lineage>
</organism>
<feature type="chain" id="PRO_0000257374" description="Ribosomal RNA small subunit methyltransferase A">
    <location>
        <begin position="1"/>
        <end position="262"/>
    </location>
</feature>
<feature type="binding site" evidence="1">
    <location>
        <position position="16"/>
    </location>
    <ligand>
        <name>S-adenosyl-L-methionine</name>
        <dbReference type="ChEBI" id="CHEBI:59789"/>
    </ligand>
</feature>
<feature type="binding site" evidence="1">
    <location>
        <position position="18"/>
    </location>
    <ligand>
        <name>S-adenosyl-L-methionine</name>
        <dbReference type="ChEBI" id="CHEBI:59789"/>
    </ligand>
</feature>
<feature type="binding site" evidence="1">
    <location>
        <position position="43"/>
    </location>
    <ligand>
        <name>S-adenosyl-L-methionine</name>
        <dbReference type="ChEBI" id="CHEBI:59789"/>
    </ligand>
</feature>
<feature type="binding site" evidence="1">
    <location>
        <position position="64"/>
    </location>
    <ligand>
        <name>S-adenosyl-L-methionine</name>
        <dbReference type="ChEBI" id="CHEBI:59789"/>
    </ligand>
</feature>
<feature type="binding site" evidence="1">
    <location>
        <position position="89"/>
    </location>
    <ligand>
        <name>S-adenosyl-L-methionine</name>
        <dbReference type="ChEBI" id="CHEBI:59789"/>
    </ligand>
</feature>
<feature type="binding site" evidence="1">
    <location>
        <position position="109"/>
    </location>
    <ligand>
        <name>S-adenosyl-L-methionine</name>
        <dbReference type="ChEBI" id="CHEBI:59789"/>
    </ligand>
</feature>
<sequence length="262" mass="28456">MNSSFSAPAKKSLGQHFLADRYYIDRIVQAVDPRPGQHLVEIGPGQGAITFPLLRKHGALTVIEFDRDLIAPLTDAAAPIGQLQIIHRDVLAVDFTAVADGTPIRLVGNLPYNISSPILFHALDHAGAVADMHFMLQKEVVDRMAAGPGSKVYGRLSVMLQAYCEVTALFVVPPGAFRPPPKVDSAVVRLVPRDAASVLIKDRKRFADVVRAGFGQRRKTLRNALSTVCEPAHFEAAGVRPDARAEQLEVADFIRLANVELA</sequence>
<dbReference type="EC" id="2.1.1.182" evidence="1"/>
<dbReference type="EMBL" id="CP000050">
    <property type="protein sequence ID" value="AAY50484.1"/>
    <property type="molecule type" value="Genomic_DNA"/>
</dbReference>
<dbReference type="RefSeq" id="WP_011036027.1">
    <property type="nucleotide sequence ID" value="NZ_CP155948.1"/>
</dbReference>
<dbReference type="SMR" id="Q4UR39"/>
<dbReference type="GeneID" id="58014634"/>
<dbReference type="KEGG" id="xcb:XC_3440"/>
<dbReference type="HOGENOM" id="CLU_041220_0_1_6"/>
<dbReference type="Proteomes" id="UP000000420">
    <property type="component" value="Chromosome"/>
</dbReference>
<dbReference type="GO" id="GO:0005829">
    <property type="term" value="C:cytosol"/>
    <property type="evidence" value="ECO:0007669"/>
    <property type="project" value="TreeGrafter"/>
</dbReference>
<dbReference type="GO" id="GO:0052908">
    <property type="term" value="F:16S rRNA (adenine(1518)-N(6)/adenine(1519)-N(6))-dimethyltransferase activity"/>
    <property type="evidence" value="ECO:0007669"/>
    <property type="project" value="UniProtKB-EC"/>
</dbReference>
<dbReference type="GO" id="GO:0003723">
    <property type="term" value="F:RNA binding"/>
    <property type="evidence" value="ECO:0007669"/>
    <property type="project" value="UniProtKB-KW"/>
</dbReference>
<dbReference type="FunFam" id="1.10.8.100:FF:000001">
    <property type="entry name" value="Ribosomal RNA small subunit methyltransferase A"/>
    <property type="match status" value="1"/>
</dbReference>
<dbReference type="FunFam" id="3.40.50.150:FF:000222">
    <property type="entry name" value="Ribosomal RNA small subunit methyltransferase A"/>
    <property type="match status" value="1"/>
</dbReference>
<dbReference type="Gene3D" id="1.10.8.100">
    <property type="entry name" value="Ribosomal RNA adenine dimethylase-like, domain 2"/>
    <property type="match status" value="1"/>
</dbReference>
<dbReference type="Gene3D" id="3.40.50.150">
    <property type="entry name" value="Vaccinia Virus protein VP39"/>
    <property type="match status" value="1"/>
</dbReference>
<dbReference type="HAMAP" id="MF_00607">
    <property type="entry name" value="16SrRNA_methyltr_A"/>
    <property type="match status" value="1"/>
</dbReference>
<dbReference type="InterPro" id="IPR001737">
    <property type="entry name" value="KsgA/Erm"/>
</dbReference>
<dbReference type="InterPro" id="IPR023165">
    <property type="entry name" value="rRNA_Ade_diMease-like_C"/>
</dbReference>
<dbReference type="InterPro" id="IPR020596">
    <property type="entry name" value="rRNA_Ade_Mease_Trfase_CS"/>
</dbReference>
<dbReference type="InterPro" id="IPR020598">
    <property type="entry name" value="rRNA_Ade_methylase_Trfase_N"/>
</dbReference>
<dbReference type="InterPro" id="IPR011530">
    <property type="entry name" value="rRNA_adenine_dimethylase"/>
</dbReference>
<dbReference type="InterPro" id="IPR029063">
    <property type="entry name" value="SAM-dependent_MTases_sf"/>
</dbReference>
<dbReference type="NCBIfam" id="TIGR00755">
    <property type="entry name" value="ksgA"/>
    <property type="match status" value="1"/>
</dbReference>
<dbReference type="PANTHER" id="PTHR11727">
    <property type="entry name" value="DIMETHYLADENOSINE TRANSFERASE"/>
    <property type="match status" value="1"/>
</dbReference>
<dbReference type="PANTHER" id="PTHR11727:SF7">
    <property type="entry name" value="DIMETHYLADENOSINE TRANSFERASE-RELATED"/>
    <property type="match status" value="1"/>
</dbReference>
<dbReference type="Pfam" id="PF00398">
    <property type="entry name" value="RrnaAD"/>
    <property type="match status" value="1"/>
</dbReference>
<dbReference type="SMART" id="SM00650">
    <property type="entry name" value="rADc"/>
    <property type="match status" value="1"/>
</dbReference>
<dbReference type="SUPFAM" id="SSF53335">
    <property type="entry name" value="S-adenosyl-L-methionine-dependent methyltransferases"/>
    <property type="match status" value="1"/>
</dbReference>
<dbReference type="PROSITE" id="PS01131">
    <property type="entry name" value="RRNA_A_DIMETH"/>
    <property type="match status" value="1"/>
</dbReference>
<dbReference type="PROSITE" id="PS51689">
    <property type="entry name" value="SAM_RNA_A_N6_MT"/>
    <property type="match status" value="1"/>
</dbReference>
<evidence type="ECO:0000255" key="1">
    <source>
        <dbReference type="HAMAP-Rule" id="MF_00607"/>
    </source>
</evidence>
<keyword id="KW-0963">Cytoplasm</keyword>
<keyword id="KW-0489">Methyltransferase</keyword>
<keyword id="KW-0694">RNA-binding</keyword>
<keyword id="KW-0698">rRNA processing</keyword>
<keyword id="KW-0949">S-adenosyl-L-methionine</keyword>
<keyword id="KW-0808">Transferase</keyword>
<protein>
    <recommendedName>
        <fullName evidence="1">Ribosomal RNA small subunit methyltransferase A</fullName>
        <ecNumber evidence="1">2.1.1.182</ecNumber>
    </recommendedName>
    <alternativeName>
        <fullName evidence="1">16S rRNA (adenine(1518)-N(6)/adenine(1519)-N(6))-dimethyltransferase</fullName>
    </alternativeName>
    <alternativeName>
        <fullName evidence="1">16S rRNA dimethyladenosine transferase</fullName>
    </alternativeName>
    <alternativeName>
        <fullName evidence="1">16S rRNA dimethylase</fullName>
    </alternativeName>
    <alternativeName>
        <fullName evidence="1">S-adenosylmethionine-6-N', N'-adenosyl(rRNA) dimethyltransferase</fullName>
    </alternativeName>
</protein>
<proteinExistence type="inferred from homology"/>
<accession>Q4UR39</accession>
<name>RSMA_XANC8</name>